<reference key="1">
    <citation type="journal article" date="2005" name="J. Bacteriol.">
        <title>Insights on evolution of virulence and resistance from the complete genome analysis of an early methicillin-resistant Staphylococcus aureus strain and a biofilm-producing methicillin-resistant Staphylococcus epidermidis strain.</title>
        <authorList>
            <person name="Gill S.R."/>
            <person name="Fouts D.E."/>
            <person name="Archer G.L."/>
            <person name="Mongodin E.F."/>
            <person name="DeBoy R.T."/>
            <person name="Ravel J."/>
            <person name="Paulsen I.T."/>
            <person name="Kolonay J.F."/>
            <person name="Brinkac L.M."/>
            <person name="Beanan M.J."/>
            <person name="Dodson R.J."/>
            <person name="Daugherty S.C."/>
            <person name="Madupu R."/>
            <person name="Angiuoli S.V."/>
            <person name="Durkin A.S."/>
            <person name="Haft D.H."/>
            <person name="Vamathevan J.J."/>
            <person name="Khouri H."/>
            <person name="Utterback T.R."/>
            <person name="Lee C."/>
            <person name="Dimitrov G."/>
            <person name="Jiang L."/>
            <person name="Qin H."/>
            <person name="Weidman J."/>
            <person name="Tran K."/>
            <person name="Kang K.H."/>
            <person name="Hance I.R."/>
            <person name="Nelson K.E."/>
            <person name="Fraser C.M."/>
        </authorList>
    </citation>
    <scope>NUCLEOTIDE SEQUENCE [LARGE SCALE GENOMIC DNA]</scope>
    <source>
        <strain>COL</strain>
    </source>
</reference>
<proteinExistence type="inferred from homology"/>
<evidence type="ECO:0000255" key="1">
    <source>
        <dbReference type="HAMAP-Rule" id="MF_01576"/>
    </source>
</evidence>
<gene>
    <name evidence="1" type="primary">folD</name>
    <name type="ordered locus">SACOL1072</name>
</gene>
<sequence length="286" mass="30844">MVAKILDGKQIAKDYRQGLQDQVEALKEKGFTPKLSVILVGNDGASQSYVRSKKKAAEKIGMISEIVHLEETATEEEVLNELNRLNNDDSVSGILVQVPLPKQVSEQKILEAINPEKDVDGFHPINIGKLYIDEQTFVPCTPLGIMEILKHADIDLEGKNAVVIGRSHIVGQPVSKLLLQKNASVTILHSRSKDMASYLKDADVIVSAVGKPGLVTKDVVKEGAVIIDVGNTPDENGKLKGDVDYDAVKEIAGAITPVPGGVGPLTITMVLNNTLLAEKMRRGIDS</sequence>
<keyword id="KW-0028">Amino-acid biosynthesis</keyword>
<keyword id="KW-0368">Histidine biosynthesis</keyword>
<keyword id="KW-0378">Hydrolase</keyword>
<keyword id="KW-0486">Methionine biosynthesis</keyword>
<keyword id="KW-0511">Multifunctional enzyme</keyword>
<keyword id="KW-0521">NADP</keyword>
<keyword id="KW-0554">One-carbon metabolism</keyword>
<keyword id="KW-0560">Oxidoreductase</keyword>
<keyword id="KW-0658">Purine biosynthesis</keyword>
<name>FOLD_STAAC</name>
<dbReference type="EC" id="1.5.1.5" evidence="1"/>
<dbReference type="EC" id="3.5.4.9" evidence="1"/>
<dbReference type="EMBL" id="CP000046">
    <property type="protein sequence ID" value="AAW37952.1"/>
    <property type="molecule type" value="Genomic_DNA"/>
</dbReference>
<dbReference type="RefSeq" id="WP_000225837.1">
    <property type="nucleotide sequence ID" value="NZ_JBGOFO010000002.1"/>
</dbReference>
<dbReference type="SMR" id="Q5HH21"/>
<dbReference type="KEGG" id="sac:SACOL1072"/>
<dbReference type="HOGENOM" id="CLU_034045_2_1_9"/>
<dbReference type="UniPathway" id="UPA00193"/>
<dbReference type="Proteomes" id="UP000000530">
    <property type="component" value="Chromosome"/>
</dbReference>
<dbReference type="GO" id="GO:0005829">
    <property type="term" value="C:cytosol"/>
    <property type="evidence" value="ECO:0007669"/>
    <property type="project" value="TreeGrafter"/>
</dbReference>
<dbReference type="GO" id="GO:0004477">
    <property type="term" value="F:methenyltetrahydrofolate cyclohydrolase activity"/>
    <property type="evidence" value="ECO:0007669"/>
    <property type="project" value="UniProtKB-UniRule"/>
</dbReference>
<dbReference type="GO" id="GO:0004488">
    <property type="term" value="F:methylenetetrahydrofolate dehydrogenase (NADP+) activity"/>
    <property type="evidence" value="ECO:0007669"/>
    <property type="project" value="UniProtKB-UniRule"/>
</dbReference>
<dbReference type="GO" id="GO:0000105">
    <property type="term" value="P:L-histidine biosynthetic process"/>
    <property type="evidence" value="ECO:0007669"/>
    <property type="project" value="UniProtKB-KW"/>
</dbReference>
<dbReference type="GO" id="GO:0009086">
    <property type="term" value="P:methionine biosynthetic process"/>
    <property type="evidence" value="ECO:0007669"/>
    <property type="project" value="UniProtKB-KW"/>
</dbReference>
<dbReference type="GO" id="GO:0006164">
    <property type="term" value="P:purine nucleotide biosynthetic process"/>
    <property type="evidence" value="ECO:0007669"/>
    <property type="project" value="UniProtKB-KW"/>
</dbReference>
<dbReference type="GO" id="GO:0035999">
    <property type="term" value="P:tetrahydrofolate interconversion"/>
    <property type="evidence" value="ECO:0007669"/>
    <property type="project" value="UniProtKB-UniRule"/>
</dbReference>
<dbReference type="CDD" id="cd01080">
    <property type="entry name" value="NAD_bind_m-THF_DH_Cyclohyd"/>
    <property type="match status" value="1"/>
</dbReference>
<dbReference type="FunFam" id="3.40.50.10860:FF:000001">
    <property type="entry name" value="Bifunctional protein FolD"/>
    <property type="match status" value="1"/>
</dbReference>
<dbReference type="FunFam" id="3.40.50.720:FF:000094">
    <property type="entry name" value="Bifunctional protein FolD"/>
    <property type="match status" value="1"/>
</dbReference>
<dbReference type="Gene3D" id="3.40.50.10860">
    <property type="entry name" value="Leucine Dehydrogenase, chain A, domain 1"/>
    <property type="match status" value="1"/>
</dbReference>
<dbReference type="Gene3D" id="3.40.50.720">
    <property type="entry name" value="NAD(P)-binding Rossmann-like Domain"/>
    <property type="match status" value="1"/>
</dbReference>
<dbReference type="HAMAP" id="MF_01576">
    <property type="entry name" value="THF_DHG_CYH"/>
    <property type="match status" value="1"/>
</dbReference>
<dbReference type="InterPro" id="IPR046346">
    <property type="entry name" value="Aminoacid_DH-like_N_sf"/>
</dbReference>
<dbReference type="InterPro" id="IPR036291">
    <property type="entry name" value="NAD(P)-bd_dom_sf"/>
</dbReference>
<dbReference type="InterPro" id="IPR000672">
    <property type="entry name" value="THF_DH/CycHdrlase"/>
</dbReference>
<dbReference type="InterPro" id="IPR020630">
    <property type="entry name" value="THF_DH/CycHdrlase_cat_dom"/>
</dbReference>
<dbReference type="InterPro" id="IPR020631">
    <property type="entry name" value="THF_DH/CycHdrlase_NAD-bd_dom"/>
</dbReference>
<dbReference type="NCBIfam" id="NF010772">
    <property type="entry name" value="PRK14175.1"/>
    <property type="match status" value="1"/>
</dbReference>
<dbReference type="PANTHER" id="PTHR48099:SF5">
    <property type="entry name" value="C-1-TETRAHYDROFOLATE SYNTHASE, CYTOPLASMIC"/>
    <property type="match status" value="1"/>
</dbReference>
<dbReference type="PANTHER" id="PTHR48099">
    <property type="entry name" value="C-1-TETRAHYDROFOLATE SYNTHASE, CYTOPLASMIC-RELATED"/>
    <property type="match status" value="1"/>
</dbReference>
<dbReference type="Pfam" id="PF00763">
    <property type="entry name" value="THF_DHG_CYH"/>
    <property type="match status" value="1"/>
</dbReference>
<dbReference type="Pfam" id="PF02882">
    <property type="entry name" value="THF_DHG_CYH_C"/>
    <property type="match status" value="1"/>
</dbReference>
<dbReference type="PRINTS" id="PR00085">
    <property type="entry name" value="THFDHDRGNASE"/>
</dbReference>
<dbReference type="SUPFAM" id="SSF53223">
    <property type="entry name" value="Aminoacid dehydrogenase-like, N-terminal domain"/>
    <property type="match status" value="1"/>
</dbReference>
<dbReference type="SUPFAM" id="SSF51735">
    <property type="entry name" value="NAD(P)-binding Rossmann-fold domains"/>
    <property type="match status" value="1"/>
</dbReference>
<comment type="function">
    <text evidence="1">Catalyzes the oxidation of 5,10-methylenetetrahydrofolate to 5,10-methenyltetrahydrofolate and then the hydrolysis of 5,10-methenyltetrahydrofolate to 10-formyltetrahydrofolate.</text>
</comment>
<comment type="catalytic activity">
    <reaction evidence="1">
        <text>(6R)-5,10-methylene-5,6,7,8-tetrahydrofolate + NADP(+) = (6R)-5,10-methenyltetrahydrofolate + NADPH</text>
        <dbReference type="Rhea" id="RHEA:22812"/>
        <dbReference type="ChEBI" id="CHEBI:15636"/>
        <dbReference type="ChEBI" id="CHEBI:57455"/>
        <dbReference type="ChEBI" id="CHEBI:57783"/>
        <dbReference type="ChEBI" id="CHEBI:58349"/>
        <dbReference type="EC" id="1.5.1.5"/>
    </reaction>
</comment>
<comment type="catalytic activity">
    <reaction evidence="1">
        <text>(6R)-5,10-methenyltetrahydrofolate + H2O = (6R)-10-formyltetrahydrofolate + H(+)</text>
        <dbReference type="Rhea" id="RHEA:23700"/>
        <dbReference type="ChEBI" id="CHEBI:15377"/>
        <dbReference type="ChEBI" id="CHEBI:15378"/>
        <dbReference type="ChEBI" id="CHEBI:57455"/>
        <dbReference type="ChEBI" id="CHEBI:195366"/>
        <dbReference type="EC" id="3.5.4.9"/>
    </reaction>
</comment>
<comment type="pathway">
    <text evidence="1">One-carbon metabolism; tetrahydrofolate interconversion.</text>
</comment>
<comment type="subunit">
    <text evidence="1">Homodimer.</text>
</comment>
<comment type="similarity">
    <text evidence="1">Belongs to the tetrahydrofolate dehydrogenase/cyclohydrolase family.</text>
</comment>
<protein>
    <recommendedName>
        <fullName evidence="1">Bifunctional protein FolD</fullName>
    </recommendedName>
    <domain>
        <recommendedName>
            <fullName evidence="1">Methylenetetrahydrofolate dehydrogenase</fullName>
            <ecNumber evidence="1">1.5.1.5</ecNumber>
        </recommendedName>
    </domain>
    <domain>
        <recommendedName>
            <fullName evidence="1">Methenyltetrahydrofolate cyclohydrolase</fullName>
            <ecNumber evidence="1">3.5.4.9</ecNumber>
        </recommendedName>
    </domain>
</protein>
<accession>Q5HH21</accession>
<feature type="chain" id="PRO_0000265945" description="Bifunctional protein FolD">
    <location>
        <begin position="1"/>
        <end position="286"/>
    </location>
</feature>
<feature type="binding site" evidence="1">
    <location>
        <begin position="165"/>
        <end position="167"/>
    </location>
    <ligand>
        <name>NADP(+)</name>
        <dbReference type="ChEBI" id="CHEBI:58349"/>
    </ligand>
</feature>
<feature type="binding site" evidence="1">
    <location>
        <position position="190"/>
    </location>
    <ligand>
        <name>NADP(+)</name>
        <dbReference type="ChEBI" id="CHEBI:58349"/>
    </ligand>
</feature>
<organism>
    <name type="scientific">Staphylococcus aureus (strain COL)</name>
    <dbReference type="NCBI Taxonomy" id="93062"/>
    <lineage>
        <taxon>Bacteria</taxon>
        <taxon>Bacillati</taxon>
        <taxon>Bacillota</taxon>
        <taxon>Bacilli</taxon>
        <taxon>Bacillales</taxon>
        <taxon>Staphylococcaceae</taxon>
        <taxon>Staphylococcus</taxon>
    </lineage>
</organism>